<keyword id="KW-0024">Alternative initiation</keyword>
<keyword id="KW-0067">ATP-binding</keyword>
<keyword id="KW-1003">Cell membrane</keyword>
<keyword id="KW-0140">cGMP</keyword>
<keyword id="KW-0142">cGMP-binding</keyword>
<keyword id="KW-0963">Cytoplasm</keyword>
<keyword id="KW-0418">Kinase</keyword>
<keyword id="KW-0449">Lipoprotein</keyword>
<keyword id="KW-0460">Magnesium</keyword>
<keyword id="KW-0472">Membrane</keyword>
<keyword id="KW-0479">Metal-binding</keyword>
<keyword id="KW-0519">Myristate</keyword>
<keyword id="KW-0547">Nucleotide-binding</keyword>
<keyword id="KW-0564">Palmitate</keyword>
<keyword id="KW-0723">Serine/threonine-protein kinase</keyword>
<keyword id="KW-0808">Transferase</keyword>
<proteinExistence type="evidence at protein level"/>
<comment type="function">
    <text evidence="7 8 9 10 11 12">Serine/threonine protein kinase which acts as a downstream effector of the second messenger cGMP (PubMed:11897122, PubMed:12455981). Plays an essential role in tachyzoite invasion of and egress from host cells (PubMed:28465425, PubMed:30753127, PubMed:31235476). During invasion of host cells, regulates the apico-basal flux of F-actin probably via Ca(2+)-mediated activation of CDPK1 (PubMed:30753127). In tachyzoites, required for microneme secretion (PubMed:26933037, PubMed:28465425). Required for tachyzoite gliding motility (PubMed:31235476).</text>
</comment>
<comment type="function">
    <molecule>Isoform 1</molecule>
    <text evidence="10">Plays an essential role in parasite invasion of and egress from host cells, and microneme secretion.</text>
</comment>
<comment type="function">
    <molecule>Isoform 2</molecule>
    <text evidence="10">Dispensable for parasite invasion of and egress from host cells, and microneme secretion.</text>
</comment>
<comment type="catalytic activity">
    <reaction evidence="7 8">
        <text>L-seryl-[protein] + ATP = O-phospho-L-seryl-[protein] + ADP + H(+)</text>
        <dbReference type="Rhea" id="RHEA:17989"/>
        <dbReference type="Rhea" id="RHEA-COMP:9863"/>
        <dbReference type="Rhea" id="RHEA-COMP:11604"/>
        <dbReference type="ChEBI" id="CHEBI:15378"/>
        <dbReference type="ChEBI" id="CHEBI:29999"/>
        <dbReference type="ChEBI" id="CHEBI:30616"/>
        <dbReference type="ChEBI" id="CHEBI:83421"/>
        <dbReference type="ChEBI" id="CHEBI:456216"/>
        <dbReference type="EC" id="2.7.11.12"/>
    </reaction>
</comment>
<comment type="catalytic activity">
    <reaction evidence="7 8">
        <text>L-threonyl-[protein] + ATP = O-phospho-L-threonyl-[protein] + ADP + H(+)</text>
        <dbReference type="Rhea" id="RHEA:46608"/>
        <dbReference type="Rhea" id="RHEA-COMP:11060"/>
        <dbReference type="Rhea" id="RHEA-COMP:11605"/>
        <dbReference type="ChEBI" id="CHEBI:15378"/>
        <dbReference type="ChEBI" id="CHEBI:30013"/>
        <dbReference type="ChEBI" id="CHEBI:30616"/>
        <dbReference type="ChEBI" id="CHEBI:61977"/>
        <dbReference type="ChEBI" id="CHEBI:456216"/>
        <dbReference type="EC" id="2.7.11.12"/>
    </reaction>
</comment>
<comment type="cofactor">
    <cofactor evidence="7">
        <name>Mg(2+)</name>
        <dbReference type="ChEBI" id="CHEBI:18420"/>
    </cofactor>
</comment>
<comment type="activity regulation">
    <text evidence="7 8">Activated by cGMP (PubMed:11897122, PubMed:12455981). The cGMP-binding domains acts cooperatively to activate PKG (PubMed:11897122, PubMed:12455981). Inhibited by the antiparasitic small molecule 4-[2-(4-fluorophenyl)-5-(1-methylpiperidine-4-yl)-1Hpyrrol- 3-yl]pyridine (compound 1) (PubMed:11897122, PubMed:12455981).</text>
</comment>
<comment type="biophysicochemical properties">
    <kinetics>
        <KM evidence="7 8">7.3 uM for ATP</KM>
    </kinetics>
</comment>
<comment type="subcellular location">
    <subcellularLocation>
        <location evidence="12">Cytoplasm</location>
    </subcellularLocation>
    <subcellularLocation>
        <location evidence="12">Membrane</location>
        <topology evidence="14">Peripheral membrane protein</topology>
        <orientation evidence="14">Cytoplasmic side</orientation>
    </subcellularLocation>
</comment>
<comment type="subcellular location">
    <molecule>Isoform 1</molecule>
    <subcellularLocation>
        <location evidence="6 10">Cell membrane</location>
        <topology evidence="7">Lipid-anchor</topology>
    </subcellularLocation>
    <text evidence="10">Membrane localization is essential to regulate parasite invasion, egress and microneme secretion.</text>
</comment>
<comment type="subcellular location">
    <molecule>Isoform 2</molecule>
    <subcellularLocation>
        <location evidence="7 10">Cytoplasm</location>
    </subcellularLocation>
</comment>
<comment type="alternative products">
    <event type="alternative initiation"/>
    <isoform>
        <id>Q8MMZ7-1</id>
        <name>1</name>
        <name evidence="13">Isoform I</name>
        <sequence type="displayed"/>
    </isoform>
    <isoform>
        <id>Q8MMZ7-2</id>
        <name>2</name>
        <name evidence="13">Isoform II</name>
        <sequence type="described" ref="VSP_060899"/>
    </isoform>
</comment>
<comment type="developmental stage">
    <text evidence="7 8 10">Expressed in tachyzoites (at protein level).</text>
</comment>
<comment type="disruption phenotype">
    <text evidence="8 10 12">Knockout in tachyzoites is lethal (PubMed:12455981). Conditional knockout in tachyzoites impairs lytic growth in host cells (PubMed:28465425, PubMed:31235476). However, parasite intracellular replication is only slightly affected (PubMed:31235476). Impaired microneme secretion, motility and, invasion of and egress from host cells (PubMed:28465425, PubMed:31235476).</text>
</comment>
<comment type="disruption phenotype">
    <molecule>Isoform 1</molecule>
    <text evidence="10">Impaired growth in host cells (PubMed:28465425). Impaired microneme secretion and, invasion of and egress from host cells (PubMed:28465425).</text>
</comment>
<comment type="disruption phenotype">
    <molecule>Isoform 2</molecule>
    <text evidence="10">Normal growth in host cells (PubMed:28465425). Microneme secretion and, invasion of and egress from host cells are partially impaired (PubMed:28465425).</text>
</comment>
<comment type="similarity">
    <text evidence="14">Belongs to the protein kinase superfamily. AGC Ser/Thr protein kinase family. cGMP subfamily.</text>
</comment>
<protein>
    <recommendedName>
        <fullName evidence="13">cGMP-dependent protein kinase</fullName>
        <ecNumber evidence="7 8">2.7.11.12</ecNumber>
    </recommendedName>
    <alternativeName>
        <fullName evidence="13">TgPKG</fullName>
    </alternativeName>
</protein>
<name>KGP_TOXGO</name>
<organism evidence="16">
    <name type="scientific">Toxoplasma gondii</name>
    <dbReference type="NCBI Taxonomy" id="5811"/>
    <lineage>
        <taxon>Eukaryota</taxon>
        <taxon>Sar</taxon>
        <taxon>Alveolata</taxon>
        <taxon>Apicomplexa</taxon>
        <taxon>Conoidasida</taxon>
        <taxon>Coccidia</taxon>
        <taxon>Eucoccidiorida</taxon>
        <taxon>Eimeriorina</taxon>
        <taxon>Sarcocystidae</taxon>
        <taxon>Toxoplasma</taxon>
    </lineage>
</organism>
<sequence length="994" mass="111255">MGACISKNSSARVSRSSALSASKQTVAASAPPGAAGDETSATGAAEEASRNSLARVDGTRASAAELERAPDGVCPDREEPGTANAEQGGVTEKKDTRETLAGMNSPKTLEAEAQEDDPKREAPNQDVPSEAPEGPKEKPGGDRKPAQKAILKQDDSHTEEEKLNAHLAYREKTPADFALIQDSLKANLVCSSLNEGEIDALAVAMQFFTFKKGDVVTKQGEPGSYFFIIHSGTFDVLVNDKRVNAMDKGKAFGEIALIHNTERSATVVASSTEGALWGVQRHTFRETLKQLSSRNFAENRQFLASVKFFEMLTEAQKNVITNALVVENFKPGQPIVKEGDAGDVLYILKSGKAKVSIGGREIRMLRKGDYFGERALLYKEPRSATITAEEFTVCVSIGRELLDRVLGNLQHVLFRNIMVEALQQSKVYELFQGDQLSKLIEAAVVKDYGADYVILDKENKTKGIRFFFVLEGELSVYAYTQNPATKEEERKLAATLKRGQAFGEEYVLNPTRPFNHYVKSVGPCKLALFTSSVLTATLGGEDIDETLDFNNKRAIIRKMYIFRYLSDHQMTMLIKAFKTVRYMSGEYIIKEGERGTRFFIIKAGEVAILKNNKRLRTLGRHDYFGERALLYDKPRTASVCANSAGVDLWVVDKSVFNEIIKGPMLAHLEERIRMQDTKVEFQDLQVVRVVGRGTFGTVKLVRHVPTDIRYALKCVSRRSVIALSQQQHIRLEREIMAENDHPFIIRLVRTFRDKEFLYFLTELVTGGELYDAIRKLGLLARSQAQFYLASIVLAIEYLHERNIAYRDLKPENILLDSQGYVKLIDFGCAKKMQGRAYTLVGTPHYMAPEVILGKGYTLTADTWAFGVCLYEFMCGPLPFGNDAEDQLEIFRDILTGKLVFPHYVTDQDAINLMKRLLCRLPEVRIGCSINGYKDIKEHAFFGDFDWDKLAGRGLPPPLAPKGETYAEDTEQSSFELDEDDTIVLEDEYDWDKDF</sequence>
<evidence type="ECO:0000250" key="1">
    <source>
        <dbReference type="UniProtKB" id="Q8I719"/>
    </source>
</evidence>
<evidence type="ECO:0000255" key="2">
    <source>
        <dbReference type="PROSITE-ProRule" id="PRU00060"/>
    </source>
</evidence>
<evidence type="ECO:0000255" key="3">
    <source>
        <dbReference type="PROSITE-ProRule" id="PRU00159"/>
    </source>
</evidence>
<evidence type="ECO:0000255" key="4">
    <source>
        <dbReference type="PROSITE-ProRule" id="PRU00618"/>
    </source>
</evidence>
<evidence type="ECO:0000256" key="5">
    <source>
        <dbReference type="SAM" id="MobiDB-lite"/>
    </source>
</evidence>
<evidence type="ECO:0000269" key="6">
    <source>
    </source>
</evidence>
<evidence type="ECO:0000269" key="7">
    <source>
    </source>
</evidence>
<evidence type="ECO:0000269" key="8">
    <source>
    </source>
</evidence>
<evidence type="ECO:0000269" key="9">
    <source>
    </source>
</evidence>
<evidence type="ECO:0000269" key="10">
    <source>
    </source>
</evidence>
<evidence type="ECO:0000269" key="11">
    <source>
    </source>
</evidence>
<evidence type="ECO:0000269" key="12">
    <source>
    </source>
</evidence>
<evidence type="ECO:0000303" key="13">
    <source>
    </source>
</evidence>
<evidence type="ECO:0000305" key="14"/>
<evidence type="ECO:0000305" key="15">
    <source>
    </source>
</evidence>
<evidence type="ECO:0000312" key="16">
    <source>
        <dbReference type="EMBL" id="AAM20901.1"/>
    </source>
</evidence>
<evidence type="ECO:0000312" key="17">
    <source>
        <dbReference type="EMBL" id="AAM27174.1"/>
    </source>
</evidence>
<feature type="initiator methionine" description="Removed" evidence="15">
    <location>
        <position position="1"/>
    </location>
</feature>
<feature type="chain" id="PRO_0000452025" description="cGMP-dependent protein kinase">
    <location>
        <begin position="2"/>
        <end position="994"/>
    </location>
</feature>
<feature type="domain" description="Protein kinase" evidence="3">
    <location>
        <begin position="684"/>
        <end position="941"/>
    </location>
</feature>
<feature type="domain" description="AGC-kinase C-terminal" evidence="4">
    <location>
        <begin position="942"/>
        <end position="994"/>
    </location>
</feature>
<feature type="region of interest" description="Disordered" evidence="5">
    <location>
        <begin position="1"/>
        <end position="162"/>
    </location>
</feature>
<feature type="region of interest" description="cNMP-binding domain 1" evidence="2">
    <location>
        <begin position="189"/>
        <end position="305"/>
    </location>
</feature>
<feature type="region of interest" description="cNMP-binding domain 2" evidence="2">
    <location>
        <begin position="308"/>
        <end position="407"/>
    </location>
</feature>
<feature type="region of interest" description="cNMP-binding domain 3" evidence="2">
    <location>
        <begin position="463"/>
        <end position="539"/>
    </location>
</feature>
<feature type="region of interest" description="cNMP-binding domain 4" evidence="2">
    <location>
        <begin position="561"/>
        <end position="660"/>
    </location>
</feature>
<feature type="region of interest" description="Disordered" evidence="5">
    <location>
        <begin position="954"/>
        <end position="976"/>
    </location>
</feature>
<feature type="compositionally biased region" description="Low complexity" evidence="5">
    <location>
        <begin position="9"/>
        <end position="22"/>
    </location>
</feature>
<feature type="compositionally biased region" description="Low complexity" evidence="5">
    <location>
        <begin position="33"/>
        <end position="46"/>
    </location>
</feature>
<feature type="compositionally biased region" description="Basic and acidic residues" evidence="5">
    <location>
        <begin position="65"/>
        <end position="80"/>
    </location>
</feature>
<feature type="compositionally biased region" description="Basic and acidic residues" evidence="5">
    <location>
        <begin position="133"/>
        <end position="162"/>
    </location>
</feature>
<feature type="compositionally biased region" description="Acidic residues" evidence="5">
    <location>
        <begin position="965"/>
        <end position="976"/>
    </location>
</feature>
<feature type="active site" description="Proton acceptor" evidence="3">
    <location>
        <position position="807"/>
    </location>
</feature>
<feature type="binding site" evidence="1">
    <location>
        <position position="253"/>
    </location>
    <ligand>
        <name>3',5'-cyclic GMP</name>
        <dbReference type="ChEBI" id="CHEBI:57746"/>
        <label>1</label>
        <note>allosteric activator</note>
    </ligand>
</feature>
<feature type="binding site" evidence="1">
    <location>
        <position position="254"/>
    </location>
    <ligand>
        <name>3',5'-cyclic GMP</name>
        <dbReference type="ChEBI" id="CHEBI:57746"/>
        <label>1</label>
        <note>allosteric activator</note>
    </ligand>
</feature>
<feature type="binding site" evidence="1">
    <location>
        <position position="256"/>
    </location>
    <ligand>
        <name>3',5'-cyclic GMP</name>
        <dbReference type="ChEBI" id="CHEBI:57746"/>
        <label>1</label>
        <note>allosteric activator</note>
    </ligand>
</feature>
<feature type="binding site" evidence="1">
    <location>
        <position position="263"/>
    </location>
    <ligand>
        <name>3',5'-cyclic GMP</name>
        <dbReference type="ChEBI" id="CHEBI:57746"/>
        <label>1</label>
        <note>allosteric activator</note>
    </ligand>
</feature>
<feature type="binding site" evidence="1">
    <location>
        <position position="264"/>
    </location>
    <ligand>
        <name>3',5'-cyclic GMP</name>
        <dbReference type="ChEBI" id="CHEBI:57746"/>
        <label>1</label>
        <note>allosteric activator</note>
    </ligand>
</feature>
<feature type="binding site" evidence="1">
    <location>
        <position position="616"/>
    </location>
    <ligand>
        <name>3',5'-cyclic GMP</name>
        <dbReference type="ChEBI" id="CHEBI:57746"/>
        <label>2</label>
        <note>allosteric activator</note>
    </ligand>
</feature>
<feature type="binding site" evidence="1">
    <location>
        <position position="625"/>
    </location>
    <ligand>
        <name>3',5'-cyclic GMP</name>
        <dbReference type="ChEBI" id="CHEBI:57746"/>
        <label>2</label>
        <note>allosteric activator</note>
    </ligand>
</feature>
<feature type="binding site" evidence="1">
    <location>
        <position position="626"/>
    </location>
    <ligand>
        <name>3',5'-cyclic GMP</name>
        <dbReference type="ChEBI" id="CHEBI:57746"/>
        <label>2</label>
        <note>allosteric activator</note>
    </ligand>
</feature>
<feature type="binding site" evidence="1">
    <location>
        <position position="628"/>
    </location>
    <ligand>
        <name>3',5'-cyclic GMP</name>
        <dbReference type="ChEBI" id="CHEBI:57746"/>
        <label>2</label>
        <note>allosteric activator</note>
    </ligand>
</feature>
<feature type="binding site" evidence="1">
    <location>
        <position position="635"/>
    </location>
    <ligand>
        <name>3',5'-cyclic GMP</name>
        <dbReference type="ChEBI" id="CHEBI:57746"/>
        <label>2</label>
        <note>allosteric activator</note>
    </ligand>
</feature>
<feature type="binding site" evidence="1">
    <location>
        <position position="636"/>
    </location>
    <ligand>
        <name>3',5'-cyclic GMP</name>
        <dbReference type="ChEBI" id="CHEBI:57746"/>
        <label>2</label>
        <note>allosteric activator</note>
    </ligand>
</feature>
<feature type="binding site" evidence="3">
    <location>
        <begin position="690"/>
        <end position="698"/>
    </location>
    <ligand>
        <name>ATP</name>
        <dbReference type="ChEBI" id="CHEBI:30616"/>
    </ligand>
</feature>
<feature type="binding site" evidence="3">
    <location>
        <position position="713"/>
    </location>
    <ligand>
        <name>ATP</name>
        <dbReference type="ChEBI" id="CHEBI:30616"/>
    </ligand>
</feature>
<feature type="lipid moiety-binding region" description="N-myristoyl glycine" evidence="7">
    <location>
        <position position="2"/>
    </location>
</feature>
<feature type="lipid moiety-binding region" description="S-palmitoyl cysteine" evidence="7">
    <location>
        <position position="4"/>
    </location>
</feature>
<feature type="splice variant" id="VSP_060899" description="In isoform 2." evidence="14">
    <location>
        <begin position="1"/>
        <end position="102"/>
    </location>
</feature>
<feature type="mutagenesis site" description="Loss of isoform 1 expression." evidence="7">
    <original>M</original>
    <variation>A</variation>
    <location>
        <position position="1"/>
    </location>
</feature>
<feature type="mutagenesis site" description="Loss of membrane localization." evidence="7">
    <original>G</original>
    <variation>A</variation>
    <location>
        <position position="2"/>
    </location>
</feature>
<feature type="mutagenesis site" description="Loss of myristoylation and palmitoylation. Loss of membrane localization." evidence="7">
    <location>
        <position position="2"/>
    </location>
</feature>
<feature type="mutagenesis site" description="Partial loss of myristoylation. Loss of palmitoylation. Partial loss of membrane localization." evidence="7">
    <original>C</original>
    <variation>S</variation>
    <location>
        <position position="4"/>
    </location>
</feature>
<feature type="mutagenesis site" description="Loss of isoform 2 expression." evidence="7">
    <original>M</original>
    <variation>A</variation>
    <location>
        <position position="103"/>
    </location>
</feature>
<feature type="mutagenesis site" description="16% reduction in catalytic activity. 64% and 87% reduction in catalytic activity respectively; when associated with A-382 or A-635. Complete loss of catalytic activity; when associated with A-382 and A-635." evidence="7">
    <original>R</original>
    <variation>A</variation>
    <location>
        <position position="263"/>
    </location>
</feature>
<feature type="mutagenesis site" description="28% reduction in catalytic activity. 64% reduction in catalytic activity; when associated with A-263. Complete loss of catalytic activity; when associated with A-263 and A-635." evidence="7">
    <original>R</original>
    <variation>A</variation>
    <location>
        <position position="382"/>
    </location>
</feature>
<feature type="mutagenesis site" description="77% reduction in catalytic activity. 87% reduction in catalytic activity; when associated with A-263. Complete loss of catalytic activity; when associated with A-263 and A-382." evidence="7">
    <original>R</original>
    <variation>A</variation>
    <location>
        <position position="635"/>
    </location>
</feature>
<feature type="mutagenesis site" description="No effect on catalytic activity. No effect on virulence in mouse host. No effect on microneme secretion. Reduces sensitivity to antiparasitic inhibitor compound 1." evidence="8 9">
    <original>T</original>
    <variation>M</variation>
    <variation>Q</variation>
    <location>
        <position position="761"/>
    </location>
</feature>
<feature type="sequence conflict" description="In Ref. 3; AAM27174." evidence="14" ref="3">
    <original>P</original>
    <variation>L</variation>
    <location>
        <position position="118"/>
    </location>
</feature>
<dbReference type="EC" id="2.7.11.12" evidence="7 8"/>
<dbReference type="EMBL" id="AF413570">
    <property type="protein sequence ID" value="AAM20901.1"/>
    <property type="molecule type" value="mRNA"/>
</dbReference>
<dbReference type="EMBL" id="AF448496">
    <property type="protein sequence ID" value="AAM27174.1"/>
    <property type="molecule type" value="Genomic_DNA"/>
</dbReference>
<dbReference type="SMR" id="Q8MMZ7"/>
<dbReference type="BindingDB" id="Q8MMZ7"/>
<dbReference type="iPTMnet" id="Q8MMZ7"/>
<dbReference type="VEuPathDB" id="ToxoDB:TGARI_311360A"/>
<dbReference type="VEuPathDB" id="ToxoDB:TGARI_311360B"/>
<dbReference type="VEuPathDB" id="ToxoDB:TGCAST_311300"/>
<dbReference type="VEuPathDB" id="ToxoDB:TGCAST_311360A"/>
<dbReference type="VEuPathDB" id="ToxoDB:TGCAST_311360B"/>
<dbReference type="VEuPathDB" id="ToxoDB:TGCOUG_311360A"/>
<dbReference type="VEuPathDB" id="ToxoDB:TGCOUG_311360B"/>
<dbReference type="VEuPathDB" id="ToxoDB:TGDOM2_286470"/>
<dbReference type="VEuPathDB" id="ToxoDB:TGDOM2_311300"/>
<dbReference type="VEuPathDB" id="ToxoDB:TGDOM2_311360A"/>
<dbReference type="VEuPathDB" id="ToxoDB:TGFOU_311360B"/>
<dbReference type="VEuPathDB" id="ToxoDB:TGFOU_311360C"/>
<dbReference type="VEuPathDB" id="ToxoDB:TGFOU_311360D"/>
<dbReference type="VEuPathDB" id="ToxoDB:TGGT1_311360"/>
<dbReference type="VEuPathDB" id="ToxoDB:TGMAS_311300"/>
<dbReference type="VEuPathDB" id="ToxoDB:TGMAS_311360A"/>
<dbReference type="VEuPathDB" id="ToxoDB:TGMAS_311360C"/>
<dbReference type="VEuPathDB" id="ToxoDB:TGME49_311360"/>
<dbReference type="VEuPathDB" id="ToxoDB:TGP89_242070"/>
<dbReference type="VEuPathDB" id="ToxoDB:TGP89_311360A"/>
<dbReference type="VEuPathDB" id="ToxoDB:TGP89_311360C"/>
<dbReference type="VEuPathDB" id="ToxoDB:TGPRC2_311360A"/>
<dbReference type="VEuPathDB" id="ToxoDB:TGPRC2_311360B"/>
<dbReference type="VEuPathDB" id="ToxoDB:TGRH88_050830"/>
<dbReference type="VEuPathDB" id="ToxoDB:TGRUB_242070B"/>
<dbReference type="VEuPathDB" id="ToxoDB:TGRUB_311360A"/>
<dbReference type="VEuPathDB" id="ToxoDB:TGRUB_311360C"/>
<dbReference type="VEuPathDB" id="ToxoDB:TGVAND_311360A"/>
<dbReference type="VEuPathDB" id="ToxoDB:TGVAND_311360B"/>
<dbReference type="VEuPathDB" id="ToxoDB:TGVEG_311360"/>
<dbReference type="BRENDA" id="2.7.11.12">
    <property type="organism ID" value="6411"/>
</dbReference>
<dbReference type="SABIO-RK" id="Q8MMZ7"/>
<dbReference type="GO" id="GO:0016324">
    <property type="term" value="C:apical plasma membrane"/>
    <property type="evidence" value="ECO:0000314"/>
    <property type="project" value="UniProtKB"/>
</dbReference>
<dbReference type="GO" id="GO:0005952">
    <property type="term" value="C:cAMP-dependent protein kinase complex"/>
    <property type="evidence" value="ECO:0007669"/>
    <property type="project" value="TreeGrafter"/>
</dbReference>
<dbReference type="GO" id="GO:0005737">
    <property type="term" value="C:cytoplasm"/>
    <property type="evidence" value="ECO:0000314"/>
    <property type="project" value="UniProtKB"/>
</dbReference>
<dbReference type="GO" id="GO:0005886">
    <property type="term" value="C:plasma membrane"/>
    <property type="evidence" value="ECO:0000314"/>
    <property type="project" value="UniProtKB"/>
</dbReference>
<dbReference type="GO" id="GO:0005524">
    <property type="term" value="F:ATP binding"/>
    <property type="evidence" value="ECO:0007669"/>
    <property type="project" value="UniProtKB-KW"/>
</dbReference>
<dbReference type="GO" id="GO:0004691">
    <property type="term" value="F:cAMP-dependent protein kinase activity"/>
    <property type="evidence" value="ECO:0007669"/>
    <property type="project" value="TreeGrafter"/>
</dbReference>
<dbReference type="GO" id="GO:0030553">
    <property type="term" value="F:cGMP binding"/>
    <property type="evidence" value="ECO:0000314"/>
    <property type="project" value="UniProtKB"/>
</dbReference>
<dbReference type="GO" id="GO:0004692">
    <property type="term" value="F:cGMP-dependent protein kinase activity"/>
    <property type="evidence" value="ECO:0000314"/>
    <property type="project" value="UniProtKB"/>
</dbReference>
<dbReference type="GO" id="GO:0046872">
    <property type="term" value="F:metal ion binding"/>
    <property type="evidence" value="ECO:0007669"/>
    <property type="project" value="UniProtKB-KW"/>
</dbReference>
<dbReference type="GO" id="GO:2000147">
    <property type="term" value="P:positive regulation of cell motility"/>
    <property type="evidence" value="ECO:0000315"/>
    <property type="project" value="UniProtKB"/>
</dbReference>
<dbReference type="GO" id="GO:0006468">
    <property type="term" value="P:protein phosphorylation"/>
    <property type="evidence" value="ECO:0000314"/>
    <property type="project" value="UniProtKB"/>
</dbReference>
<dbReference type="CDD" id="cd00038">
    <property type="entry name" value="CAP_ED"/>
    <property type="match status" value="4"/>
</dbReference>
<dbReference type="CDD" id="cd05572">
    <property type="entry name" value="STKc_cGK"/>
    <property type="match status" value="1"/>
</dbReference>
<dbReference type="FunFam" id="2.60.120.10:FF:000068">
    <property type="entry name" value="cGMP-dependent protein kinase"/>
    <property type="match status" value="1"/>
</dbReference>
<dbReference type="FunFam" id="1.10.510.10:FF:000210">
    <property type="entry name" value="Non-specific serine/threonine protein kinase"/>
    <property type="match status" value="1"/>
</dbReference>
<dbReference type="Gene3D" id="2.60.120.10">
    <property type="entry name" value="Jelly Rolls"/>
    <property type="match status" value="4"/>
</dbReference>
<dbReference type="Gene3D" id="3.30.200.20">
    <property type="entry name" value="Phosphorylase Kinase, domain 1"/>
    <property type="match status" value="1"/>
</dbReference>
<dbReference type="Gene3D" id="1.10.510.10">
    <property type="entry name" value="Transferase(Phosphotransferase) domain 1"/>
    <property type="match status" value="1"/>
</dbReference>
<dbReference type="InterPro" id="IPR000961">
    <property type="entry name" value="AGC-kinase_C"/>
</dbReference>
<dbReference type="InterPro" id="IPR018488">
    <property type="entry name" value="cNMP-bd_CS"/>
</dbReference>
<dbReference type="InterPro" id="IPR000595">
    <property type="entry name" value="cNMP-bd_dom"/>
</dbReference>
<dbReference type="InterPro" id="IPR018490">
    <property type="entry name" value="cNMP-bd_dom_sf"/>
</dbReference>
<dbReference type="InterPro" id="IPR011009">
    <property type="entry name" value="Kinase-like_dom_sf"/>
</dbReference>
<dbReference type="InterPro" id="IPR000719">
    <property type="entry name" value="Prot_kinase_dom"/>
</dbReference>
<dbReference type="InterPro" id="IPR017441">
    <property type="entry name" value="Protein_kinase_ATP_BS"/>
</dbReference>
<dbReference type="InterPro" id="IPR014710">
    <property type="entry name" value="RmlC-like_jellyroll"/>
</dbReference>
<dbReference type="InterPro" id="IPR008271">
    <property type="entry name" value="Ser/Thr_kinase_AS"/>
</dbReference>
<dbReference type="InterPro" id="IPR035014">
    <property type="entry name" value="STKc_cGK"/>
</dbReference>
<dbReference type="PANTHER" id="PTHR24353:SF37">
    <property type="entry name" value="CAMP-DEPENDENT PROTEIN KINASE CATALYTIC SUBUNIT PRKX"/>
    <property type="match status" value="1"/>
</dbReference>
<dbReference type="PANTHER" id="PTHR24353">
    <property type="entry name" value="CYCLIC NUCLEOTIDE-DEPENDENT PROTEIN KINASE"/>
    <property type="match status" value="1"/>
</dbReference>
<dbReference type="Pfam" id="PF00027">
    <property type="entry name" value="cNMP_binding"/>
    <property type="match status" value="3"/>
</dbReference>
<dbReference type="Pfam" id="PF00069">
    <property type="entry name" value="Pkinase"/>
    <property type="match status" value="1"/>
</dbReference>
<dbReference type="PRINTS" id="PR00103">
    <property type="entry name" value="CAMPKINASE"/>
</dbReference>
<dbReference type="SMART" id="SM00100">
    <property type="entry name" value="cNMP"/>
    <property type="match status" value="4"/>
</dbReference>
<dbReference type="SMART" id="SM00220">
    <property type="entry name" value="S_TKc"/>
    <property type="match status" value="1"/>
</dbReference>
<dbReference type="SUPFAM" id="SSF51206">
    <property type="entry name" value="cAMP-binding domain-like"/>
    <property type="match status" value="4"/>
</dbReference>
<dbReference type="SUPFAM" id="SSF56112">
    <property type="entry name" value="Protein kinase-like (PK-like)"/>
    <property type="match status" value="1"/>
</dbReference>
<dbReference type="PROSITE" id="PS51285">
    <property type="entry name" value="AGC_KINASE_CTER"/>
    <property type="match status" value="1"/>
</dbReference>
<dbReference type="PROSITE" id="PS00888">
    <property type="entry name" value="CNMP_BINDING_1"/>
    <property type="match status" value="2"/>
</dbReference>
<dbReference type="PROSITE" id="PS00889">
    <property type="entry name" value="CNMP_BINDING_2"/>
    <property type="match status" value="3"/>
</dbReference>
<dbReference type="PROSITE" id="PS50042">
    <property type="entry name" value="CNMP_BINDING_3"/>
    <property type="match status" value="4"/>
</dbReference>
<dbReference type="PROSITE" id="PS00107">
    <property type="entry name" value="PROTEIN_KINASE_ATP"/>
    <property type="match status" value="1"/>
</dbReference>
<dbReference type="PROSITE" id="PS50011">
    <property type="entry name" value="PROTEIN_KINASE_DOM"/>
    <property type="match status" value="1"/>
</dbReference>
<dbReference type="PROSITE" id="PS00108">
    <property type="entry name" value="PROTEIN_KINASE_ST"/>
    <property type="match status" value="1"/>
</dbReference>
<accession>Q8MMZ7</accession>
<accession>Q8MMP4</accession>
<reference evidence="16" key="1">
    <citation type="journal article" date="2002" name="J. Biol. Chem.">
        <title>Purification and molecular characterization of cGMP-dependent protein kinase from Apicomplexan parasites. A novel chemotherapeutic target.</title>
        <authorList>
            <person name="Gurnett A."/>
            <person name="Liberator P.A."/>
            <person name="Dulski P."/>
            <person name="Salowe S.P."/>
            <person name="Donald R.G.K."/>
            <person name="Anderson J.W."/>
            <person name="Wiltsie J."/>
            <person name="Diaz-Saldana C.A."/>
            <person name="Harris G."/>
            <person name="Chang B."/>
            <person name="Darkin-Rattray S.J."/>
            <person name="Nare B."/>
            <person name="Crumley T."/>
            <person name="Blum P."/>
            <person name="Misura A."/>
            <person name="Tamas T."/>
            <person name="Sardana M."/>
            <person name="Yuan J."/>
            <person name="Biftu T."/>
            <person name="Schmatz D."/>
        </authorList>
    </citation>
    <scope>NUCLEOTIDE SEQUENCE [MRNA]</scope>
</reference>
<reference evidence="16" key="2">
    <citation type="journal article" date="2002" name="Mol. Biochem. Parasitol.">
        <title>Molecular characterization of a coccidian parasite cGMP dependent protein kinase.</title>
        <authorList>
            <person name="Donald R.G."/>
            <person name="Liberator P.A."/>
        </authorList>
    </citation>
    <scope>NUCLEOTIDE SEQUENCE [MRNA] (ISOFORM 1)</scope>
    <scope>ALTERNATIVE SPLICING</scope>
    <scope>FUNCTION</scope>
    <scope>CATALYTIC ACTIVITY</scope>
    <scope>COFACTOR</scope>
    <scope>ACTIVITY REGULATION</scope>
    <scope>BIOPHYSICOCHEMICAL PROPERTIES</scope>
    <scope>SUBCELLULAR LOCATION (ISOFORMS 1 AND 2)</scope>
    <scope>DEVELOPMENTAL STAGE</scope>
    <scope>MYRISTOYLATION AT GLY-2</scope>
    <scope>PALMITOYLATION AT CYS-4</scope>
    <scope>MUTAGENESIS OF MET-1; GLY-2; CYS-4; MET-103; ARG-263; ARG-382 AND ARG-635</scope>
    <source>
        <strain evidence="13">RH</strain>
    </source>
</reference>
<reference evidence="17" key="3">
    <citation type="journal article" date="2002" name="Eukaryot. Cell">
        <title>Toxoplasma gondii cyclic GMP-dependent kinase: chemotherapeutic targeting of an essential parasite protein kinase.</title>
        <authorList>
            <person name="Donald R.G."/>
            <person name="Allocco J."/>
            <person name="Singh S.B."/>
            <person name="Nare B."/>
            <person name="Salowe S.P."/>
            <person name="Wiltsie J."/>
            <person name="Liberator P.A."/>
        </authorList>
    </citation>
    <scope>NUCLEOTIDE SEQUENCE [GENOMIC DNA]</scope>
    <scope>FUNCTION</scope>
    <scope>CATALYTIC ACTIVITY</scope>
    <scope>ACTIVITY REGULATION</scope>
    <scope>BIOPHYSICOCHEMICAL PROPERTIES</scope>
    <scope>DEVELOPMENTAL STAGE</scope>
    <scope>DISRUPTION PHENOTYPE</scope>
    <scope>MUTAGENESIS OF THR-761</scope>
    <source>
        <strain evidence="17">RH</strain>
    </source>
</reference>
<reference evidence="14" key="4">
    <citation type="journal article" date="2016" name="J. Biol. Chem.">
        <title>Serum Albumin Stimulates Protein Kinase G-dependent Microneme Secretion in Toxoplasma gondii.</title>
        <authorList>
            <person name="Brown K.M."/>
            <person name="Lourido S."/>
            <person name="Sibley L.D."/>
        </authorList>
    </citation>
    <scope>FUNCTION</scope>
    <scope>MUTAGENESIS OF THR-761</scope>
</reference>
<reference evidence="14" key="5">
    <citation type="journal article" date="2017" name="MBio">
        <title>Plasma Membrane Association by N-Acylation Governs PKG Function in Toxoplasma gondii.</title>
        <authorList>
            <person name="Brown K.M."/>
            <person name="Long S."/>
            <person name="Sibley L.D."/>
        </authorList>
    </citation>
    <scope>FUNCTION (ISOFORMS 1 AND 2)</scope>
    <scope>SUBCELLULAR LOCATION (ISOFORMS 1 AND 2)</scope>
    <scope>DEVELOPMENTAL STAGE</scope>
    <scope>DISRUPTION PHENOTYPE (ISOFORMS 1 AND 2)</scope>
</reference>
<reference evidence="14" key="6">
    <citation type="journal article" date="2019" name="Elife">
        <title>Three F-actin assembly centers regulate organelle inheritance, cell-cell communication and motility in Toxoplasma gondii.</title>
        <authorList>
            <person name="Tosetti N."/>
            <person name="Dos Santos Pacheco N."/>
            <person name="Soldati-Favre D."/>
            <person name="Jacot D."/>
        </authorList>
    </citation>
    <scope>FUNCTION</scope>
</reference>
<reference key="7">
    <citation type="journal article" date="2019" name="Life. Sci Alliance">
        <title>An unusual and vital protein with guanylate cyclase and P4-ATPase domains in a pathogenic protist.</title>
        <authorList>
            <person name="Guenay-Esiyok O."/>
            <person name="Scheib U."/>
            <person name="Noll M."/>
            <person name="Gupta N."/>
        </authorList>
    </citation>
    <scope>FUNCTION</scope>
    <scope>SUBCELLULAR LOCATION</scope>
    <scope>DISRUPTION PHENOTYPE</scope>
    <source>
        <strain evidence="12">RH</strain>
    </source>
</reference>
<gene>
    <name evidence="13" type="primary">PKG</name>
</gene>